<comment type="function">
    <text evidence="1">Allows the formation of correctly charged Asn-tRNA(Asn) or Gln-tRNA(Gln) through the transamidation of misacylated Asp-tRNA(Asn) or Glu-tRNA(Gln) in organisms which lack either or both of asparaginyl-tRNA or glutaminyl-tRNA synthetases. The reaction takes place in the presence of glutamine and ATP through an activated phospho-Asp-tRNA(Asn) or phospho-Glu-tRNA(Gln).</text>
</comment>
<comment type="catalytic activity">
    <reaction evidence="1">
        <text>L-glutamyl-tRNA(Gln) + L-glutamine + ATP + H2O = L-glutaminyl-tRNA(Gln) + L-glutamate + ADP + phosphate + H(+)</text>
        <dbReference type="Rhea" id="RHEA:17521"/>
        <dbReference type="Rhea" id="RHEA-COMP:9681"/>
        <dbReference type="Rhea" id="RHEA-COMP:9684"/>
        <dbReference type="ChEBI" id="CHEBI:15377"/>
        <dbReference type="ChEBI" id="CHEBI:15378"/>
        <dbReference type="ChEBI" id="CHEBI:29985"/>
        <dbReference type="ChEBI" id="CHEBI:30616"/>
        <dbReference type="ChEBI" id="CHEBI:43474"/>
        <dbReference type="ChEBI" id="CHEBI:58359"/>
        <dbReference type="ChEBI" id="CHEBI:78520"/>
        <dbReference type="ChEBI" id="CHEBI:78521"/>
        <dbReference type="ChEBI" id="CHEBI:456216"/>
    </reaction>
</comment>
<comment type="catalytic activity">
    <reaction evidence="1">
        <text>L-aspartyl-tRNA(Asn) + L-glutamine + ATP + H2O = L-asparaginyl-tRNA(Asn) + L-glutamate + ADP + phosphate + 2 H(+)</text>
        <dbReference type="Rhea" id="RHEA:14513"/>
        <dbReference type="Rhea" id="RHEA-COMP:9674"/>
        <dbReference type="Rhea" id="RHEA-COMP:9677"/>
        <dbReference type="ChEBI" id="CHEBI:15377"/>
        <dbReference type="ChEBI" id="CHEBI:15378"/>
        <dbReference type="ChEBI" id="CHEBI:29985"/>
        <dbReference type="ChEBI" id="CHEBI:30616"/>
        <dbReference type="ChEBI" id="CHEBI:43474"/>
        <dbReference type="ChEBI" id="CHEBI:58359"/>
        <dbReference type="ChEBI" id="CHEBI:78515"/>
        <dbReference type="ChEBI" id="CHEBI:78516"/>
        <dbReference type="ChEBI" id="CHEBI:456216"/>
    </reaction>
</comment>
<comment type="subunit">
    <text evidence="1">Heterotrimer of A, B and C subunits.</text>
</comment>
<comment type="similarity">
    <text evidence="1">Belongs to the GatC family.</text>
</comment>
<reference key="1">
    <citation type="journal article" date="2009" name="J. Bacteriol.">
        <title>Role of conjugative elements in the evolution of the multidrug-resistant pandemic clone Streptococcus pneumoniae Spain23F ST81.</title>
        <authorList>
            <person name="Croucher N.J."/>
            <person name="Walker D."/>
            <person name="Romero P."/>
            <person name="Lennard N."/>
            <person name="Paterson G.K."/>
            <person name="Bason N.C."/>
            <person name="Mitchell A.M."/>
            <person name="Quail M.A."/>
            <person name="Andrew P.W."/>
            <person name="Parkhill J."/>
            <person name="Bentley S.D."/>
            <person name="Mitchell T.J."/>
        </authorList>
    </citation>
    <scope>NUCLEOTIDE SEQUENCE [LARGE SCALE GENOMIC DNA]</scope>
    <source>
        <strain>ATCC 700669 / Spain 23F-1</strain>
    </source>
</reference>
<name>GATC_STRPJ</name>
<keyword id="KW-0067">ATP-binding</keyword>
<keyword id="KW-0436">Ligase</keyword>
<keyword id="KW-0547">Nucleotide-binding</keyword>
<keyword id="KW-0648">Protein biosynthesis</keyword>
<accession>B8ZLK2</accession>
<sequence>MKITQEEVTHVANLSKLRFSEEETAAFATTLSKIVDMVELLGEVDTTGVAPTTTMADRKTVLRPDVAEEGTDRDRLFKNVPEQDNYYIKVPAILDDGGDA</sequence>
<feature type="chain" id="PRO_1000122585" description="Aspartyl/glutamyl-tRNA(Asn/Gln) amidotransferase subunit C">
    <location>
        <begin position="1"/>
        <end position="100"/>
    </location>
</feature>
<evidence type="ECO:0000255" key="1">
    <source>
        <dbReference type="HAMAP-Rule" id="MF_00122"/>
    </source>
</evidence>
<protein>
    <recommendedName>
        <fullName evidence="1">Aspartyl/glutamyl-tRNA(Asn/Gln) amidotransferase subunit C</fullName>
        <shortName evidence="1">Asp/Glu-ADT subunit C</shortName>
        <ecNumber evidence="1">6.3.5.-</ecNumber>
    </recommendedName>
</protein>
<organism>
    <name type="scientific">Streptococcus pneumoniae (strain ATCC 700669 / Spain 23F-1)</name>
    <dbReference type="NCBI Taxonomy" id="561276"/>
    <lineage>
        <taxon>Bacteria</taxon>
        <taxon>Bacillati</taxon>
        <taxon>Bacillota</taxon>
        <taxon>Bacilli</taxon>
        <taxon>Lactobacillales</taxon>
        <taxon>Streptococcaceae</taxon>
        <taxon>Streptococcus</taxon>
    </lineage>
</organism>
<gene>
    <name evidence="1" type="primary">gatC</name>
    <name type="ordered locus">SPN23F04110</name>
</gene>
<proteinExistence type="inferred from homology"/>
<dbReference type="EC" id="6.3.5.-" evidence="1"/>
<dbReference type="EMBL" id="FM211187">
    <property type="protein sequence ID" value="CAR68260.1"/>
    <property type="molecule type" value="Genomic_DNA"/>
</dbReference>
<dbReference type="RefSeq" id="WP_000705421.1">
    <property type="nucleotide sequence ID" value="NC_011900.1"/>
</dbReference>
<dbReference type="SMR" id="B8ZLK2"/>
<dbReference type="KEGG" id="sne:SPN23F04110"/>
<dbReference type="HOGENOM" id="CLU_105899_1_2_9"/>
<dbReference type="GO" id="GO:0050566">
    <property type="term" value="F:asparaginyl-tRNA synthase (glutamine-hydrolyzing) activity"/>
    <property type="evidence" value="ECO:0007669"/>
    <property type="project" value="RHEA"/>
</dbReference>
<dbReference type="GO" id="GO:0005524">
    <property type="term" value="F:ATP binding"/>
    <property type="evidence" value="ECO:0007669"/>
    <property type="project" value="UniProtKB-KW"/>
</dbReference>
<dbReference type="GO" id="GO:0050567">
    <property type="term" value="F:glutaminyl-tRNA synthase (glutamine-hydrolyzing) activity"/>
    <property type="evidence" value="ECO:0007669"/>
    <property type="project" value="UniProtKB-UniRule"/>
</dbReference>
<dbReference type="GO" id="GO:0070681">
    <property type="term" value="P:glutaminyl-tRNAGln biosynthesis via transamidation"/>
    <property type="evidence" value="ECO:0007669"/>
    <property type="project" value="TreeGrafter"/>
</dbReference>
<dbReference type="GO" id="GO:0006450">
    <property type="term" value="P:regulation of translational fidelity"/>
    <property type="evidence" value="ECO:0007669"/>
    <property type="project" value="InterPro"/>
</dbReference>
<dbReference type="GO" id="GO:0006412">
    <property type="term" value="P:translation"/>
    <property type="evidence" value="ECO:0007669"/>
    <property type="project" value="UniProtKB-UniRule"/>
</dbReference>
<dbReference type="Gene3D" id="1.10.20.60">
    <property type="entry name" value="Glu-tRNAGln amidotransferase C subunit, N-terminal domain"/>
    <property type="match status" value="1"/>
</dbReference>
<dbReference type="HAMAP" id="MF_00122">
    <property type="entry name" value="GatC"/>
    <property type="match status" value="1"/>
</dbReference>
<dbReference type="InterPro" id="IPR036113">
    <property type="entry name" value="Asp/Glu-ADT_sf_sub_c"/>
</dbReference>
<dbReference type="InterPro" id="IPR003837">
    <property type="entry name" value="GatC"/>
</dbReference>
<dbReference type="NCBIfam" id="TIGR00135">
    <property type="entry name" value="gatC"/>
    <property type="match status" value="1"/>
</dbReference>
<dbReference type="PANTHER" id="PTHR15004">
    <property type="entry name" value="GLUTAMYL-TRNA(GLN) AMIDOTRANSFERASE SUBUNIT C, MITOCHONDRIAL"/>
    <property type="match status" value="1"/>
</dbReference>
<dbReference type="PANTHER" id="PTHR15004:SF0">
    <property type="entry name" value="GLUTAMYL-TRNA(GLN) AMIDOTRANSFERASE SUBUNIT C, MITOCHONDRIAL"/>
    <property type="match status" value="1"/>
</dbReference>
<dbReference type="Pfam" id="PF02686">
    <property type="entry name" value="GatC"/>
    <property type="match status" value="1"/>
</dbReference>
<dbReference type="SUPFAM" id="SSF141000">
    <property type="entry name" value="Glu-tRNAGln amidotransferase C subunit"/>
    <property type="match status" value="1"/>
</dbReference>